<dbReference type="EC" id="1.14.-.-" evidence="1"/>
<dbReference type="EMBL" id="CP000383">
    <property type="protein sequence ID" value="ABG59943.1"/>
    <property type="molecule type" value="Genomic_DNA"/>
</dbReference>
<dbReference type="RefSeq" id="WP_011586053.1">
    <property type="nucleotide sequence ID" value="NC_008255.1"/>
</dbReference>
<dbReference type="SMR" id="Q11RM1"/>
<dbReference type="STRING" id="269798.CHU_2691"/>
<dbReference type="KEGG" id="chu:CHU_2691"/>
<dbReference type="eggNOG" id="COG1054">
    <property type="taxonomic scope" value="Bacteria"/>
</dbReference>
<dbReference type="HOGENOM" id="CLU_038878_1_0_10"/>
<dbReference type="OrthoDB" id="9778326at2"/>
<dbReference type="Proteomes" id="UP000001822">
    <property type="component" value="Chromosome"/>
</dbReference>
<dbReference type="GO" id="GO:0016705">
    <property type="term" value="F:oxidoreductase activity, acting on paired donors, with incorporation or reduction of molecular oxygen"/>
    <property type="evidence" value="ECO:0007669"/>
    <property type="project" value="UniProtKB-UniRule"/>
</dbReference>
<dbReference type="GO" id="GO:0006400">
    <property type="term" value="P:tRNA modification"/>
    <property type="evidence" value="ECO:0007669"/>
    <property type="project" value="UniProtKB-UniRule"/>
</dbReference>
<dbReference type="CDD" id="cd01518">
    <property type="entry name" value="RHOD_YceA"/>
    <property type="match status" value="1"/>
</dbReference>
<dbReference type="Gene3D" id="3.30.70.100">
    <property type="match status" value="1"/>
</dbReference>
<dbReference type="Gene3D" id="3.40.250.10">
    <property type="entry name" value="Rhodanese-like domain"/>
    <property type="match status" value="1"/>
</dbReference>
<dbReference type="HAMAP" id="MF_00469">
    <property type="entry name" value="TrhO"/>
    <property type="match status" value="1"/>
</dbReference>
<dbReference type="InterPro" id="IPR001763">
    <property type="entry name" value="Rhodanese-like_dom"/>
</dbReference>
<dbReference type="InterPro" id="IPR036873">
    <property type="entry name" value="Rhodanese-like_dom_sf"/>
</dbReference>
<dbReference type="InterPro" id="IPR022111">
    <property type="entry name" value="Rhodanese_C"/>
</dbReference>
<dbReference type="InterPro" id="IPR020936">
    <property type="entry name" value="TrhO"/>
</dbReference>
<dbReference type="InterPro" id="IPR040503">
    <property type="entry name" value="TRHO_N"/>
</dbReference>
<dbReference type="NCBIfam" id="NF001135">
    <property type="entry name" value="PRK00142.1-3"/>
    <property type="match status" value="1"/>
</dbReference>
<dbReference type="PANTHER" id="PTHR43268:SF3">
    <property type="entry name" value="RHODANESE-LIKE DOMAIN-CONTAINING PROTEIN 7-RELATED"/>
    <property type="match status" value="1"/>
</dbReference>
<dbReference type="PANTHER" id="PTHR43268">
    <property type="entry name" value="THIOSULFATE SULFURTRANSFERASE/RHODANESE-LIKE DOMAIN-CONTAINING PROTEIN 2"/>
    <property type="match status" value="1"/>
</dbReference>
<dbReference type="Pfam" id="PF00581">
    <property type="entry name" value="Rhodanese"/>
    <property type="match status" value="1"/>
</dbReference>
<dbReference type="Pfam" id="PF12368">
    <property type="entry name" value="Rhodanese_C"/>
    <property type="match status" value="1"/>
</dbReference>
<dbReference type="Pfam" id="PF17773">
    <property type="entry name" value="UPF0176_N"/>
    <property type="match status" value="1"/>
</dbReference>
<dbReference type="SMART" id="SM00450">
    <property type="entry name" value="RHOD"/>
    <property type="match status" value="1"/>
</dbReference>
<dbReference type="SUPFAM" id="SSF52821">
    <property type="entry name" value="Rhodanese/Cell cycle control phosphatase"/>
    <property type="match status" value="1"/>
</dbReference>
<dbReference type="PROSITE" id="PS50206">
    <property type="entry name" value="RHODANESE_3"/>
    <property type="match status" value="1"/>
</dbReference>
<name>TRHO_CYTH3</name>
<protein>
    <recommendedName>
        <fullName evidence="1">tRNA uridine(34) hydroxylase</fullName>
        <ecNumber evidence="1">1.14.-.-</ecNumber>
    </recommendedName>
    <alternativeName>
        <fullName evidence="1">tRNA hydroxylation protein O</fullName>
    </alternativeName>
</protein>
<gene>
    <name evidence="1" type="primary">trhO</name>
    <name type="ordered locus">CHU_2691</name>
</gene>
<proteinExistence type="inferred from homology"/>
<feature type="chain" id="PRO_1000081187" description="tRNA uridine(34) hydroxylase">
    <location>
        <begin position="1"/>
        <end position="312"/>
    </location>
</feature>
<feature type="domain" description="Rhodanese" evidence="1">
    <location>
        <begin position="123"/>
        <end position="216"/>
    </location>
</feature>
<feature type="active site" description="Cysteine persulfide intermediate" evidence="1">
    <location>
        <position position="176"/>
    </location>
</feature>
<keyword id="KW-0560">Oxidoreductase</keyword>
<keyword id="KW-1185">Reference proteome</keyword>
<keyword id="KW-0819">tRNA processing</keyword>
<accession>Q11RM1</accession>
<organism>
    <name type="scientific">Cytophaga hutchinsonii (strain ATCC 33406 / DSM 1761 / CIP 103989 / NBRC 15051 / NCIMB 9469 / D465)</name>
    <dbReference type="NCBI Taxonomy" id="269798"/>
    <lineage>
        <taxon>Bacteria</taxon>
        <taxon>Pseudomonadati</taxon>
        <taxon>Bacteroidota</taxon>
        <taxon>Cytophagia</taxon>
        <taxon>Cytophagales</taxon>
        <taxon>Cytophagaceae</taxon>
        <taxon>Cytophaga</taxon>
    </lineage>
</organism>
<comment type="function">
    <text evidence="1">Catalyzes oxygen-dependent 5-hydroxyuridine (ho5U) modification at position 34 in tRNAs.</text>
</comment>
<comment type="catalytic activity">
    <reaction evidence="1">
        <text>uridine(34) in tRNA + AH2 + O2 = 5-hydroxyuridine(34) in tRNA + A + H2O</text>
        <dbReference type="Rhea" id="RHEA:64224"/>
        <dbReference type="Rhea" id="RHEA-COMP:11727"/>
        <dbReference type="Rhea" id="RHEA-COMP:13381"/>
        <dbReference type="ChEBI" id="CHEBI:13193"/>
        <dbReference type="ChEBI" id="CHEBI:15377"/>
        <dbReference type="ChEBI" id="CHEBI:15379"/>
        <dbReference type="ChEBI" id="CHEBI:17499"/>
        <dbReference type="ChEBI" id="CHEBI:65315"/>
        <dbReference type="ChEBI" id="CHEBI:136877"/>
    </reaction>
</comment>
<comment type="similarity">
    <text evidence="1">Belongs to the TrhO family.</text>
</comment>
<sequence length="312" mass="35553">MKDYQILLYYCYTHIADPDAYREEHHLKCLELGLLGRIIIASEGLNGTVSGTEEGCRQYMEYVKADPRFEALEFKIEAHEGHAFQKLYVRVKPEIVHSSLKHVDPTKRTGKHLEPAEFKAMKDRDDVVVLDVRSNYEHQVGRFKNAVTIDMENFRDFPEKIKELDHLKGKKVLTYCTGGIKCEKASAFLLEQGFEDVYQLHGGIIKYGIEQGGEDFEGKCYVFDGRVIADVNKVNPSIISTCYVCGTLSDRMVNCSNPVCNRHEPMCEACGEKMQGACSEECKCHPEKRPYDGTGAYPKELNGYDPYLHVKR</sequence>
<reference key="1">
    <citation type="journal article" date="2007" name="Appl. Environ. Microbiol.">
        <title>Genome sequence of the cellulolytic gliding bacterium Cytophaga hutchinsonii.</title>
        <authorList>
            <person name="Xie G."/>
            <person name="Bruce D.C."/>
            <person name="Challacombe J.F."/>
            <person name="Chertkov O."/>
            <person name="Detter J.C."/>
            <person name="Gilna P."/>
            <person name="Han C.S."/>
            <person name="Lucas S."/>
            <person name="Misra M."/>
            <person name="Myers G.L."/>
            <person name="Richardson P."/>
            <person name="Tapia R."/>
            <person name="Thayer N."/>
            <person name="Thompson L.S."/>
            <person name="Brettin T.S."/>
            <person name="Henrissat B."/>
            <person name="Wilson D.B."/>
            <person name="McBride M.J."/>
        </authorList>
    </citation>
    <scope>NUCLEOTIDE SEQUENCE [LARGE SCALE GENOMIC DNA]</scope>
    <source>
        <strain>ATCC 33406 / DSM 1761 / JCM 20678 / CIP 103989 / IAM 12607 / NBRC 15051 / NCIMB 9469 / D465</strain>
    </source>
</reference>
<evidence type="ECO:0000255" key="1">
    <source>
        <dbReference type="HAMAP-Rule" id="MF_00469"/>
    </source>
</evidence>